<feature type="chain" id="PRO_1000004102" description="Small ribosomal subunit protein uS2">
    <location>
        <begin position="1"/>
        <end position="251"/>
    </location>
</feature>
<sequence length="251" mass="28400">MAIISLAEMMESGVHFGHQTRRWNPRMAPYIYTARNGVHIIDLVKTAQCVETAYRWVRTNAEQGKRFLFVGTKRQAAGIIAEEATRCGSYYINQRWLGGMLTNWATIKGRVDRLKELERMEETGALALRPKKEAAVLRRELERLQKYLGGIKNMRRLPDAVVIIDQKREYNAVQECQKLGIPIVAMLDTNCDPDVVDVPIPGNDDAIRSVKLIVSKLADAIYEARHGAAPVAEEYDYDGAEDEYEDDADEA</sequence>
<proteinExistence type="inferred from homology"/>
<gene>
    <name evidence="1" type="primary">rpsB</name>
    <name evidence="1" type="synonym">rps2</name>
    <name type="ordered locus">Synpcc7942_2530</name>
</gene>
<accession>Q31K59</accession>
<dbReference type="EMBL" id="CP000100">
    <property type="protein sequence ID" value="ABB58560.1"/>
    <property type="molecule type" value="Genomic_DNA"/>
</dbReference>
<dbReference type="RefSeq" id="WP_011378508.1">
    <property type="nucleotide sequence ID" value="NZ_JACJTX010000001.1"/>
</dbReference>
<dbReference type="SMR" id="Q31K59"/>
<dbReference type="STRING" id="1140.Synpcc7942_2530"/>
<dbReference type="PaxDb" id="1140-Synpcc7942_2530"/>
<dbReference type="GeneID" id="72431421"/>
<dbReference type="KEGG" id="syf:Synpcc7942_2530"/>
<dbReference type="eggNOG" id="COG0052">
    <property type="taxonomic scope" value="Bacteria"/>
</dbReference>
<dbReference type="HOGENOM" id="CLU_040318_1_2_3"/>
<dbReference type="OrthoDB" id="9808036at2"/>
<dbReference type="BioCyc" id="SYNEL:SYNPCC7942_2530-MONOMER"/>
<dbReference type="Proteomes" id="UP000889800">
    <property type="component" value="Chromosome"/>
</dbReference>
<dbReference type="GO" id="GO:0022627">
    <property type="term" value="C:cytosolic small ribosomal subunit"/>
    <property type="evidence" value="ECO:0007669"/>
    <property type="project" value="TreeGrafter"/>
</dbReference>
<dbReference type="GO" id="GO:0003735">
    <property type="term" value="F:structural constituent of ribosome"/>
    <property type="evidence" value="ECO:0007669"/>
    <property type="project" value="InterPro"/>
</dbReference>
<dbReference type="GO" id="GO:0006412">
    <property type="term" value="P:translation"/>
    <property type="evidence" value="ECO:0007669"/>
    <property type="project" value="UniProtKB-UniRule"/>
</dbReference>
<dbReference type="CDD" id="cd01425">
    <property type="entry name" value="RPS2"/>
    <property type="match status" value="1"/>
</dbReference>
<dbReference type="FunFam" id="1.10.287.610:FF:000001">
    <property type="entry name" value="30S ribosomal protein S2"/>
    <property type="match status" value="1"/>
</dbReference>
<dbReference type="Gene3D" id="3.40.50.10490">
    <property type="entry name" value="Glucose-6-phosphate isomerase like protein, domain 1"/>
    <property type="match status" value="1"/>
</dbReference>
<dbReference type="Gene3D" id="1.10.287.610">
    <property type="entry name" value="Helix hairpin bin"/>
    <property type="match status" value="1"/>
</dbReference>
<dbReference type="HAMAP" id="MF_00291_B">
    <property type="entry name" value="Ribosomal_uS2_B"/>
    <property type="match status" value="1"/>
</dbReference>
<dbReference type="InterPro" id="IPR001865">
    <property type="entry name" value="Ribosomal_uS2"/>
</dbReference>
<dbReference type="InterPro" id="IPR005706">
    <property type="entry name" value="Ribosomal_uS2_bac/mit/plastid"/>
</dbReference>
<dbReference type="InterPro" id="IPR018130">
    <property type="entry name" value="Ribosomal_uS2_CS"/>
</dbReference>
<dbReference type="InterPro" id="IPR023591">
    <property type="entry name" value="Ribosomal_uS2_flav_dom_sf"/>
</dbReference>
<dbReference type="NCBIfam" id="TIGR01011">
    <property type="entry name" value="rpsB_bact"/>
    <property type="match status" value="1"/>
</dbReference>
<dbReference type="PANTHER" id="PTHR12534">
    <property type="entry name" value="30S RIBOSOMAL PROTEIN S2 PROKARYOTIC AND ORGANELLAR"/>
    <property type="match status" value="1"/>
</dbReference>
<dbReference type="PANTHER" id="PTHR12534:SF0">
    <property type="entry name" value="SMALL RIBOSOMAL SUBUNIT PROTEIN US2M"/>
    <property type="match status" value="1"/>
</dbReference>
<dbReference type="Pfam" id="PF00318">
    <property type="entry name" value="Ribosomal_S2"/>
    <property type="match status" value="1"/>
</dbReference>
<dbReference type="PRINTS" id="PR00395">
    <property type="entry name" value="RIBOSOMALS2"/>
</dbReference>
<dbReference type="SUPFAM" id="SSF52313">
    <property type="entry name" value="Ribosomal protein S2"/>
    <property type="match status" value="1"/>
</dbReference>
<dbReference type="PROSITE" id="PS00962">
    <property type="entry name" value="RIBOSOMAL_S2_1"/>
    <property type="match status" value="1"/>
</dbReference>
<dbReference type="PROSITE" id="PS00963">
    <property type="entry name" value="RIBOSOMAL_S2_2"/>
    <property type="match status" value="1"/>
</dbReference>
<reference key="1">
    <citation type="submission" date="2005-08" db="EMBL/GenBank/DDBJ databases">
        <title>Complete sequence of chromosome 1 of Synechococcus elongatus PCC 7942.</title>
        <authorList>
            <consortium name="US DOE Joint Genome Institute"/>
            <person name="Copeland A."/>
            <person name="Lucas S."/>
            <person name="Lapidus A."/>
            <person name="Barry K."/>
            <person name="Detter J.C."/>
            <person name="Glavina T."/>
            <person name="Hammon N."/>
            <person name="Israni S."/>
            <person name="Pitluck S."/>
            <person name="Schmutz J."/>
            <person name="Larimer F."/>
            <person name="Land M."/>
            <person name="Kyrpides N."/>
            <person name="Lykidis A."/>
            <person name="Golden S."/>
            <person name="Richardson P."/>
        </authorList>
    </citation>
    <scope>NUCLEOTIDE SEQUENCE [LARGE SCALE GENOMIC DNA]</scope>
    <source>
        <strain>ATCC 33912 / PCC 7942 / FACHB-805</strain>
    </source>
</reference>
<organism>
    <name type="scientific">Synechococcus elongatus (strain ATCC 33912 / PCC 7942 / FACHB-805)</name>
    <name type="common">Anacystis nidulans R2</name>
    <dbReference type="NCBI Taxonomy" id="1140"/>
    <lineage>
        <taxon>Bacteria</taxon>
        <taxon>Bacillati</taxon>
        <taxon>Cyanobacteriota</taxon>
        <taxon>Cyanophyceae</taxon>
        <taxon>Synechococcales</taxon>
        <taxon>Synechococcaceae</taxon>
        <taxon>Synechococcus</taxon>
    </lineage>
</organism>
<comment type="similarity">
    <text evidence="1">Belongs to the universal ribosomal protein uS2 family.</text>
</comment>
<keyword id="KW-1185">Reference proteome</keyword>
<keyword id="KW-0687">Ribonucleoprotein</keyword>
<keyword id="KW-0689">Ribosomal protein</keyword>
<evidence type="ECO:0000255" key="1">
    <source>
        <dbReference type="HAMAP-Rule" id="MF_00291"/>
    </source>
</evidence>
<evidence type="ECO:0000305" key="2"/>
<name>RS2_SYNE7</name>
<protein>
    <recommendedName>
        <fullName evidence="1">Small ribosomal subunit protein uS2</fullName>
    </recommendedName>
    <alternativeName>
        <fullName evidence="2">30S ribosomal protein S2</fullName>
    </alternativeName>
</protein>